<protein>
    <recommendedName>
        <fullName>Zinc finger C3HC-type protein 1</fullName>
    </recommendedName>
    <alternativeName>
        <fullName>Nuclear-interacting partner of ALK</fullName>
        <shortName>mNIPA</shortName>
    </alternativeName>
    <alternativeName>
        <fullName>Nuclear-interacting partner of anaplastic lymphoma kinase</fullName>
    </alternativeName>
</protein>
<name>ZC3C1_MOUSE</name>
<accession>Q80YV2</accession>
<accession>Q3TJE6</accession>
<accession>Q80Z11</accession>
<accession>Q8BTW5</accession>
<accession>Q8CI56</accession>
<accession>Q8R3U7</accession>
<sequence>MAATSEGPLFAASIEKTWGSVVRSPEGTPQKVRELIDEGIVPEEGGTEPKDTAATFQSVDGSPQAEQSPLESTSKEAFFHRVETFSSLKWAGKPPELSPLICAKYGWVTVECDMLKCSSCQAFLCASLQPTFDFGRYKERCAELKKSLCSAHEKFCFWPDSPSPDRFGMLPLGEPAVLISEFLDRFQSLCHLDLQLPSLRPEDLKTMCLTEDAVSALLHLLEDELDFHADDRKTTSKLGSDVQVQATACVLSLCGWACSSLEPTQLSLITCYQCMRKVGLWGFQQIESSMTDLEASFGLTSSPIPGVEGRPEHFPLVPESPRRMMTRSQDATVSPGSEQSEKSPGPIVSRTRSWESSSPVDRPELEAASPTTRSRPVTRSMGTGDSAGVEVPSSPLRRTKRARLCSSSSSDTSPRSFFDPTSQHRDWCPWVNITLVKETKENGETEVDACTPAEPGWKAVLTILLAHKRSNQPAETDSMSLSEKSRKVFRIFRQWESSSSS</sequence>
<keyword id="KW-0007">Acetylation</keyword>
<keyword id="KW-0025">Alternative splicing</keyword>
<keyword id="KW-0131">Cell cycle</keyword>
<keyword id="KW-0132">Cell division</keyword>
<keyword id="KW-0479">Metal-binding</keyword>
<keyword id="KW-0498">Mitosis</keyword>
<keyword id="KW-0539">Nucleus</keyword>
<keyword id="KW-0597">Phosphoprotein</keyword>
<keyword id="KW-1185">Reference proteome</keyword>
<keyword id="KW-0833">Ubl conjugation pathway</keyword>
<keyword id="KW-0862">Zinc</keyword>
<keyword id="KW-0863">Zinc-finger</keyword>
<organism>
    <name type="scientific">Mus musculus</name>
    <name type="common">Mouse</name>
    <dbReference type="NCBI Taxonomy" id="10090"/>
    <lineage>
        <taxon>Eukaryota</taxon>
        <taxon>Metazoa</taxon>
        <taxon>Chordata</taxon>
        <taxon>Craniata</taxon>
        <taxon>Vertebrata</taxon>
        <taxon>Euteleostomi</taxon>
        <taxon>Mammalia</taxon>
        <taxon>Eutheria</taxon>
        <taxon>Euarchontoglires</taxon>
        <taxon>Glires</taxon>
        <taxon>Rodentia</taxon>
        <taxon>Myomorpha</taxon>
        <taxon>Muroidea</taxon>
        <taxon>Muridae</taxon>
        <taxon>Murinae</taxon>
        <taxon>Mus</taxon>
        <taxon>Mus</taxon>
    </lineage>
</organism>
<proteinExistence type="evidence at protein level"/>
<gene>
    <name type="primary">Zc3hc1</name>
    <name type="synonym">Nipa</name>
</gene>
<reference key="1">
    <citation type="journal article" date="2003" name="J. Biol. Chem.">
        <title>Identification and characterization of a nuclear interacting partner of anaplastic lymphoma kinase (NIPA).</title>
        <authorList>
            <person name="Ouyang T."/>
            <person name="Bai R.-Y."/>
            <person name="Bassermann F."/>
            <person name="von Klitzing C."/>
            <person name="Klumpen S."/>
            <person name="Miething C."/>
            <person name="Morris S.W."/>
            <person name="Peschel C."/>
            <person name="Duyster J."/>
        </authorList>
    </citation>
    <scope>NUCLEOTIDE SEQUENCE [MRNA] (ISOFORM 1)</scope>
    <source>
        <strain>Swiss Webster</strain>
    </source>
</reference>
<reference key="2">
    <citation type="journal article" date="2005" name="Science">
        <title>The transcriptional landscape of the mammalian genome.</title>
        <authorList>
            <person name="Carninci P."/>
            <person name="Kasukawa T."/>
            <person name="Katayama S."/>
            <person name="Gough J."/>
            <person name="Frith M.C."/>
            <person name="Maeda N."/>
            <person name="Oyama R."/>
            <person name="Ravasi T."/>
            <person name="Lenhard B."/>
            <person name="Wells C."/>
            <person name="Kodzius R."/>
            <person name="Shimokawa K."/>
            <person name="Bajic V.B."/>
            <person name="Brenner S.E."/>
            <person name="Batalov S."/>
            <person name="Forrest A.R."/>
            <person name="Zavolan M."/>
            <person name="Davis M.J."/>
            <person name="Wilming L.G."/>
            <person name="Aidinis V."/>
            <person name="Allen J.E."/>
            <person name="Ambesi-Impiombato A."/>
            <person name="Apweiler R."/>
            <person name="Aturaliya R.N."/>
            <person name="Bailey T.L."/>
            <person name="Bansal M."/>
            <person name="Baxter L."/>
            <person name="Beisel K.W."/>
            <person name="Bersano T."/>
            <person name="Bono H."/>
            <person name="Chalk A.M."/>
            <person name="Chiu K.P."/>
            <person name="Choudhary V."/>
            <person name="Christoffels A."/>
            <person name="Clutterbuck D.R."/>
            <person name="Crowe M.L."/>
            <person name="Dalla E."/>
            <person name="Dalrymple B.P."/>
            <person name="de Bono B."/>
            <person name="Della Gatta G."/>
            <person name="di Bernardo D."/>
            <person name="Down T."/>
            <person name="Engstrom P."/>
            <person name="Fagiolini M."/>
            <person name="Faulkner G."/>
            <person name="Fletcher C.F."/>
            <person name="Fukushima T."/>
            <person name="Furuno M."/>
            <person name="Futaki S."/>
            <person name="Gariboldi M."/>
            <person name="Georgii-Hemming P."/>
            <person name="Gingeras T.R."/>
            <person name="Gojobori T."/>
            <person name="Green R.E."/>
            <person name="Gustincich S."/>
            <person name="Harbers M."/>
            <person name="Hayashi Y."/>
            <person name="Hensch T.K."/>
            <person name="Hirokawa N."/>
            <person name="Hill D."/>
            <person name="Huminiecki L."/>
            <person name="Iacono M."/>
            <person name="Ikeo K."/>
            <person name="Iwama A."/>
            <person name="Ishikawa T."/>
            <person name="Jakt M."/>
            <person name="Kanapin A."/>
            <person name="Katoh M."/>
            <person name="Kawasawa Y."/>
            <person name="Kelso J."/>
            <person name="Kitamura H."/>
            <person name="Kitano H."/>
            <person name="Kollias G."/>
            <person name="Krishnan S.P."/>
            <person name="Kruger A."/>
            <person name="Kummerfeld S.K."/>
            <person name="Kurochkin I.V."/>
            <person name="Lareau L.F."/>
            <person name="Lazarevic D."/>
            <person name="Lipovich L."/>
            <person name="Liu J."/>
            <person name="Liuni S."/>
            <person name="McWilliam S."/>
            <person name="Madan Babu M."/>
            <person name="Madera M."/>
            <person name="Marchionni L."/>
            <person name="Matsuda H."/>
            <person name="Matsuzawa S."/>
            <person name="Miki H."/>
            <person name="Mignone F."/>
            <person name="Miyake S."/>
            <person name="Morris K."/>
            <person name="Mottagui-Tabar S."/>
            <person name="Mulder N."/>
            <person name="Nakano N."/>
            <person name="Nakauchi H."/>
            <person name="Ng P."/>
            <person name="Nilsson R."/>
            <person name="Nishiguchi S."/>
            <person name="Nishikawa S."/>
            <person name="Nori F."/>
            <person name="Ohara O."/>
            <person name="Okazaki Y."/>
            <person name="Orlando V."/>
            <person name="Pang K.C."/>
            <person name="Pavan W.J."/>
            <person name="Pavesi G."/>
            <person name="Pesole G."/>
            <person name="Petrovsky N."/>
            <person name="Piazza S."/>
            <person name="Reed J."/>
            <person name="Reid J.F."/>
            <person name="Ring B.Z."/>
            <person name="Ringwald M."/>
            <person name="Rost B."/>
            <person name="Ruan Y."/>
            <person name="Salzberg S.L."/>
            <person name="Sandelin A."/>
            <person name="Schneider C."/>
            <person name="Schoenbach C."/>
            <person name="Sekiguchi K."/>
            <person name="Semple C.A."/>
            <person name="Seno S."/>
            <person name="Sessa L."/>
            <person name="Sheng Y."/>
            <person name="Shibata Y."/>
            <person name="Shimada H."/>
            <person name="Shimada K."/>
            <person name="Silva D."/>
            <person name="Sinclair B."/>
            <person name="Sperling S."/>
            <person name="Stupka E."/>
            <person name="Sugiura K."/>
            <person name="Sultana R."/>
            <person name="Takenaka Y."/>
            <person name="Taki K."/>
            <person name="Tammoja K."/>
            <person name="Tan S.L."/>
            <person name="Tang S."/>
            <person name="Taylor M.S."/>
            <person name="Tegner J."/>
            <person name="Teichmann S.A."/>
            <person name="Ueda H.R."/>
            <person name="van Nimwegen E."/>
            <person name="Verardo R."/>
            <person name="Wei C.L."/>
            <person name="Yagi K."/>
            <person name="Yamanishi H."/>
            <person name="Zabarovsky E."/>
            <person name="Zhu S."/>
            <person name="Zimmer A."/>
            <person name="Hide W."/>
            <person name="Bult C."/>
            <person name="Grimmond S.M."/>
            <person name="Teasdale R.D."/>
            <person name="Liu E.T."/>
            <person name="Brusic V."/>
            <person name="Quackenbush J."/>
            <person name="Wahlestedt C."/>
            <person name="Mattick J.S."/>
            <person name="Hume D.A."/>
            <person name="Kai C."/>
            <person name="Sasaki D."/>
            <person name="Tomaru Y."/>
            <person name="Fukuda S."/>
            <person name="Kanamori-Katayama M."/>
            <person name="Suzuki M."/>
            <person name="Aoki J."/>
            <person name="Arakawa T."/>
            <person name="Iida J."/>
            <person name="Imamura K."/>
            <person name="Itoh M."/>
            <person name="Kato T."/>
            <person name="Kawaji H."/>
            <person name="Kawagashira N."/>
            <person name="Kawashima T."/>
            <person name="Kojima M."/>
            <person name="Kondo S."/>
            <person name="Konno H."/>
            <person name="Nakano K."/>
            <person name="Ninomiya N."/>
            <person name="Nishio T."/>
            <person name="Okada M."/>
            <person name="Plessy C."/>
            <person name="Shibata K."/>
            <person name="Shiraki T."/>
            <person name="Suzuki S."/>
            <person name="Tagami M."/>
            <person name="Waki K."/>
            <person name="Watahiki A."/>
            <person name="Okamura-Oho Y."/>
            <person name="Suzuki H."/>
            <person name="Kawai J."/>
            <person name="Hayashizaki Y."/>
        </authorList>
    </citation>
    <scope>NUCLEOTIDE SEQUENCE [LARGE SCALE MRNA] (ISOFORMS 1 AND 2)</scope>
    <source>
        <strain>C57BL/6J</strain>
        <strain>NOD</strain>
        <tissue>Bone marrow</tissue>
        <tissue>Placenta</tissue>
        <tissue>Thymus</tissue>
    </source>
</reference>
<reference key="3">
    <citation type="journal article" date="2004" name="Genome Res.">
        <title>The status, quality, and expansion of the NIH full-length cDNA project: the Mammalian Gene Collection (MGC).</title>
        <authorList>
            <consortium name="The MGC Project Team"/>
        </authorList>
    </citation>
    <scope>NUCLEOTIDE SEQUENCE [LARGE SCALE MRNA] (ISOFORM 1)</scope>
    <source>
        <strain>C57BL/6J</strain>
        <strain>FVB/N</strain>
        <strain>FVB/N-3</strain>
        <tissue>Embryo</tissue>
        <tissue>Mammary tumor</tissue>
    </source>
</reference>
<reference key="4">
    <citation type="journal article" date="2004" name="Mol. Cell. Proteomics">
        <title>Phosphoproteomic analysis of the developing mouse brain.</title>
        <authorList>
            <person name="Ballif B.A."/>
            <person name="Villen J."/>
            <person name="Beausoleil S.A."/>
            <person name="Schwartz D."/>
            <person name="Gygi S.P."/>
        </authorList>
    </citation>
    <scope>PHOSPHORYLATION [LARGE SCALE ANALYSIS] AT SER-62</scope>
    <scope>IDENTIFICATION BY MASS SPECTROMETRY [LARGE SCALE ANALYSIS]</scope>
    <source>
        <tissue>Embryonic brain</tissue>
    </source>
</reference>
<reference key="5">
    <citation type="journal article" date="2007" name="Proc. Natl. Acad. Sci. U.S.A.">
        <title>Large-scale phosphorylation analysis of mouse liver.</title>
        <authorList>
            <person name="Villen J."/>
            <person name="Beausoleil S.A."/>
            <person name="Gerber S.A."/>
            <person name="Gygi S.P."/>
        </authorList>
    </citation>
    <scope>IDENTIFICATION BY MASS SPECTROMETRY [LARGE SCALE ANALYSIS]</scope>
    <source>
        <tissue>Liver</tissue>
    </source>
</reference>
<reference key="6">
    <citation type="journal article" date="2009" name="Mol. Cell. Proteomics">
        <title>Large scale localization of protein phosphorylation by use of electron capture dissociation mass spectrometry.</title>
        <authorList>
            <person name="Sweet S.M."/>
            <person name="Bailey C.M."/>
            <person name="Cunningham D.L."/>
            <person name="Heath J.K."/>
            <person name="Cooper H.J."/>
        </authorList>
    </citation>
    <scope>IDENTIFICATION BY MASS SPECTROMETRY [LARGE SCALE ANALYSIS]</scope>
    <source>
        <tissue>Embryonic fibroblast</tissue>
    </source>
</reference>
<reference key="7">
    <citation type="journal article" date="2010" name="Cell">
        <title>A tissue-specific atlas of mouse protein phosphorylation and expression.</title>
        <authorList>
            <person name="Huttlin E.L."/>
            <person name="Jedrychowski M.P."/>
            <person name="Elias J.E."/>
            <person name="Goswami T."/>
            <person name="Rad R."/>
            <person name="Beausoleil S.A."/>
            <person name="Villen J."/>
            <person name="Haas W."/>
            <person name="Sowa M.E."/>
            <person name="Gygi S.P."/>
        </authorList>
    </citation>
    <scope>PHOSPHORYLATION [LARGE SCALE ANALYSIS] AT SER-62; SER-68; SER-334; SER-337; SER-343; SER-353; SER-358; SER-369 AND SER-406</scope>
    <scope>IDENTIFICATION BY MASS SPECTROMETRY [LARGE SCALE ANALYSIS]</scope>
    <source>
        <tissue>Brain</tissue>
        <tissue>Heart</tissue>
        <tissue>Kidney</tissue>
        <tissue>Liver</tissue>
        <tissue>Lung</tissue>
        <tissue>Spleen</tissue>
        <tissue>Testis</tissue>
    </source>
</reference>
<evidence type="ECO:0000250" key="1"/>
<evidence type="ECO:0000250" key="2">
    <source>
        <dbReference type="UniProtKB" id="Q86WB0"/>
    </source>
</evidence>
<evidence type="ECO:0000256" key="3">
    <source>
        <dbReference type="SAM" id="MobiDB-lite"/>
    </source>
</evidence>
<evidence type="ECO:0000303" key="4">
    <source>
    </source>
</evidence>
<evidence type="ECO:0000305" key="5"/>
<evidence type="ECO:0007744" key="6">
    <source>
    </source>
</evidence>
<evidence type="ECO:0007744" key="7">
    <source>
    </source>
</evidence>
<comment type="function">
    <text evidence="2">Required for proper positioning of a substantial amount of TPR at the nuclear basket (NB) through interaction with TPR.</text>
</comment>
<comment type="subunit">
    <text evidence="2">Interacts with TPR; this interaction mediates ZC3HC1 nuclear envelopes (NE)-association but also required for proper positioning of a substantial amount of TPR at the nuclear basket (NB).</text>
</comment>
<comment type="subcellular location">
    <subcellularLocation>
        <location evidence="2">Nucleus</location>
    </subcellularLocation>
    <subcellularLocation>
        <location evidence="2">Nucleus envelope</location>
    </subcellularLocation>
    <text evidence="2">Resident of the nuclear basket (NB). Occurs at the nuclear envelopes (NE) of all TPR-containing cell types, including proliferating and non-dividing, terminally differentiated cells of different morphogenetic origin.</text>
</comment>
<comment type="alternative products">
    <event type="alternative splicing"/>
    <isoform>
        <id>Q80YV2-1</id>
        <name>1</name>
        <sequence type="displayed"/>
    </isoform>
    <isoform>
        <id>Q80YV2-2</id>
        <name>2</name>
        <sequence type="described" ref="VSP_015219"/>
    </isoform>
</comment>
<comment type="PTM">
    <text evidence="2">Phosphorylated. May also be weakly phosphorylated on Tyr residues.</text>
</comment>
<comment type="sequence caution" evidence="5">
    <conflict type="erroneous initiation">
        <sequence resource="EMBL-CDS" id="AAH37445"/>
    </conflict>
    <text>Extended N-terminus.</text>
</comment>
<feature type="initiator methionine" description="Removed" evidence="2">
    <location>
        <position position="1"/>
    </location>
</feature>
<feature type="chain" id="PRO_0000096850" description="Zinc finger C3HC-type protein 1">
    <location>
        <begin position="2"/>
        <end position="501"/>
    </location>
</feature>
<feature type="zinc finger region" description="C3HC-type">
    <location>
        <begin position="102"/>
        <end position="156"/>
    </location>
</feature>
<feature type="region of interest" description="Disordered" evidence="3">
    <location>
        <begin position="21"/>
        <end position="73"/>
    </location>
</feature>
<feature type="region of interest" description="Disordered" evidence="3">
    <location>
        <begin position="302"/>
        <end position="421"/>
    </location>
</feature>
<feature type="short sequence motif" description="Nuclear localization signal" evidence="1">
    <location>
        <begin position="395"/>
        <end position="401"/>
    </location>
</feature>
<feature type="compositionally biased region" description="Polar residues" evidence="3">
    <location>
        <begin position="54"/>
        <end position="72"/>
    </location>
</feature>
<feature type="compositionally biased region" description="Polar residues" evidence="3">
    <location>
        <begin position="326"/>
        <end position="338"/>
    </location>
</feature>
<feature type="compositionally biased region" description="Polar residues" evidence="3">
    <location>
        <begin position="350"/>
        <end position="359"/>
    </location>
</feature>
<feature type="compositionally biased region" description="Polar residues" evidence="3">
    <location>
        <begin position="369"/>
        <end position="383"/>
    </location>
</feature>
<feature type="compositionally biased region" description="Low complexity" evidence="3">
    <location>
        <begin position="406"/>
        <end position="420"/>
    </location>
</feature>
<feature type="modified residue" description="N-acetylalanine" evidence="2">
    <location>
        <position position="2"/>
    </location>
</feature>
<feature type="modified residue" description="Phosphoserine" evidence="2">
    <location>
        <position position="24"/>
    </location>
</feature>
<feature type="modified residue" description="Phosphothreonine" evidence="2">
    <location>
        <position position="28"/>
    </location>
</feature>
<feature type="modified residue" description="Phosphoserine" evidence="2">
    <location>
        <position position="58"/>
    </location>
</feature>
<feature type="modified residue" description="Phosphoserine" evidence="6 7">
    <location>
        <position position="62"/>
    </location>
</feature>
<feature type="modified residue" description="Phosphoserine" evidence="7">
    <location>
        <position position="68"/>
    </location>
</feature>
<feature type="modified residue" description="Phosphothreonine" evidence="2">
    <location>
        <position position="84"/>
    </location>
</feature>
<feature type="modified residue" description="Phosphoserine" evidence="2">
    <location>
        <position position="320"/>
    </location>
</feature>
<feature type="modified residue" description="Phosphoserine" evidence="2">
    <location>
        <position position="328"/>
    </location>
</feature>
<feature type="modified residue" description="Phosphothreonine" evidence="2">
    <location>
        <position position="332"/>
    </location>
</feature>
<feature type="modified residue" description="Phosphoserine" evidence="7">
    <location>
        <position position="334"/>
    </location>
</feature>
<feature type="modified residue" description="Phosphoserine" evidence="7">
    <location>
        <position position="337"/>
    </location>
</feature>
<feature type="modified residue" description="Phosphoserine" evidence="7">
    <location>
        <position position="343"/>
    </location>
</feature>
<feature type="modified residue" description="Phosphoserine" evidence="7">
    <location>
        <position position="353"/>
    </location>
</feature>
<feature type="modified residue" description="Phosphoserine" evidence="7">
    <location>
        <position position="358"/>
    </location>
</feature>
<feature type="modified residue" description="Phosphoserine" evidence="7">
    <location>
        <position position="369"/>
    </location>
</feature>
<feature type="modified residue" description="Phosphoserine" evidence="2">
    <location>
        <position position="380"/>
    </location>
</feature>
<feature type="modified residue" description="Phosphothreonine" evidence="2">
    <location>
        <position position="383"/>
    </location>
</feature>
<feature type="modified residue" description="Phosphoserine" evidence="2">
    <location>
        <position position="394"/>
    </location>
</feature>
<feature type="modified residue" description="Phosphoserine" evidence="7">
    <location>
        <position position="406"/>
    </location>
</feature>
<feature type="modified residue" description="Phosphoserine" evidence="2">
    <location>
        <position position="482"/>
    </location>
</feature>
<feature type="splice variant" id="VSP_015219" description="In isoform 2." evidence="4">
    <original>SLSEKSRKVFRIFRQWESSSSS</original>
    <variation>LK</variation>
    <location>
        <begin position="480"/>
        <end position="501"/>
    </location>
</feature>
<feature type="sequence conflict" description="In Ref. 1; CAD61162." evidence="5" ref="1">
    <original>A</original>
    <variation>S</variation>
    <location>
        <position position="65"/>
    </location>
</feature>
<dbReference type="EMBL" id="AJ537495">
    <property type="protein sequence ID" value="CAD61162.1"/>
    <property type="molecule type" value="mRNA"/>
</dbReference>
<dbReference type="EMBL" id="AK088527">
    <property type="protein sequence ID" value="BAC40404.1"/>
    <property type="molecule type" value="mRNA"/>
</dbReference>
<dbReference type="EMBL" id="AK151694">
    <property type="protein sequence ID" value="BAE30618.1"/>
    <property type="molecule type" value="mRNA"/>
</dbReference>
<dbReference type="EMBL" id="AK167465">
    <property type="protein sequence ID" value="BAE39549.1"/>
    <property type="molecule type" value="mRNA"/>
</dbReference>
<dbReference type="EMBL" id="BC024560">
    <property type="protein sequence ID" value="AAH24560.1"/>
    <property type="molecule type" value="mRNA"/>
</dbReference>
<dbReference type="EMBL" id="BC037445">
    <property type="protein sequence ID" value="AAH37445.1"/>
    <property type="status" value="ALT_INIT"/>
    <property type="molecule type" value="mRNA"/>
</dbReference>
<dbReference type="EMBL" id="BC050141">
    <property type="protein sequence ID" value="AAH50141.1"/>
    <property type="molecule type" value="mRNA"/>
</dbReference>
<dbReference type="CCDS" id="CCDS19970.1">
    <molecule id="Q80YV2-2"/>
</dbReference>
<dbReference type="CCDS" id="CCDS80508.1">
    <molecule id="Q80YV2-1"/>
</dbReference>
<dbReference type="RefSeq" id="NP_001298015.1">
    <molecule id="Q80YV2-1"/>
    <property type="nucleotide sequence ID" value="NM_001311086.1"/>
</dbReference>
<dbReference type="RefSeq" id="NP_766323.1">
    <molecule id="Q80YV2-2"/>
    <property type="nucleotide sequence ID" value="NM_172735.3"/>
</dbReference>
<dbReference type="RefSeq" id="XP_017177060.1">
    <molecule id="Q80YV2-2"/>
    <property type="nucleotide sequence ID" value="XM_017321571.3"/>
</dbReference>
<dbReference type="BioGRID" id="231283">
    <property type="interactions" value="1"/>
</dbReference>
<dbReference type="FunCoup" id="Q80YV2">
    <property type="interactions" value="3167"/>
</dbReference>
<dbReference type="IntAct" id="Q80YV2">
    <property type="interactions" value="2"/>
</dbReference>
<dbReference type="MINT" id="Q80YV2"/>
<dbReference type="STRING" id="10090.ENSMUSP00000079627"/>
<dbReference type="iPTMnet" id="Q80YV2"/>
<dbReference type="PhosphoSitePlus" id="Q80YV2"/>
<dbReference type="jPOST" id="Q80YV2"/>
<dbReference type="PaxDb" id="10090-ENSMUSP00000100057"/>
<dbReference type="PeptideAtlas" id="Q80YV2"/>
<dbReference type="ProteomicsDB" id="253069">
    <molecule id="Q80YV2-1"/>
</dbReference>
<dbReference type="ProteomicsDB" id="253070">
    <molecule id="Q80YV2-2"/>
</dbReference>
<dbReference type="Pumba" id="Q80YV2"/>
<dbReference type="Antibodypedia" id="17928">
    <property type="antibodies" value="255 antibodies from 31 providers"/>
</dbReference>
<dbReference type="DNASU" id="232679"/>
<dbReference type="Ensembl" id="ENSMUST00000080812.14">
    <molecule id="Q80YV2-1"/>
    <property type="protein sequence ID" value="ENSMUSP00000079627.8"/>
    <property type="gene ID" value="ENSMUSG00000039130.19"/>
</dbReference>
<dbReference type="Ensembl" id="ENSMUST00000102992.10">
    <molecule id="Q80YV2-2"/>
    <property type="protein sequence ID" value="ENSMUSP00000100057.4"/>
    <property type="gene ID" value="ENSMUSG00000039130.19"/>
</dbReference>
<dbReference type="GeneID" id="232679"/>
<dbReference type="KEGG" id="mmu:232679"/>
<dbReference type="UCSC" id="uc009bfc.1">
    <molecule id="Q80YV2-1"/>
    <property type="organism name" value="mouse"/>
</dbReference>
<dbReference type="UCSC" id="uc009bfd.1">
    <molecule id="Q80YV2-2"/>
    <property type="organism name" value="mouse"/>
</dbReference>
<dbReference type="AGR" id="MGI:1916023"/>
<dbReference type="CTD" id="51530"/>
<dbReference type="MGI" id="MGI:1916023">
    <property type="gene designation" value="Zc3hc1"/>
</dbReference>
<dbReference type="VEuPathDB" id="HostDB:ENSMUSG00000039130"/>
<dbReference type="eggNOG" id="KOG4765">
    <property type="taxonomic scope" value="Eukaryota"/>
</dbReference>
<dbReference type="GeneTree" id="ENSGT00390000006086"/>
<dbReference type="InParanoid" id="Q80YV2"/>
<dbReference type="OMA" id="EWCPWIS"/>
<dbReference type="OrthoDB" id="614844at2759"/>
<dbReference type="PhylomeDB" id="Q80YV2"/>
<dbReference type="TreeFam" id="TF314674"/>
<dbReference type="BioGRID-ORCS" id="232679">
    <property type="hits" value="12 hits in 63 CRISPR screens"/>
</dbReference>
<dbReference type="ChiTaRS" id="Zc3hc1">
    <property type="organism name" value="mouse"/>
</dbReference>
<dbReference type="PRO" id="PR:Q80YV2"/>
<dbReference type="Proteomes" id="UP000000589">
    <property type="component" value="Chromosome 6"/>
</dbReference>
<dbReference type="RNAct" id="Q80YV2">
    <property type="molecule type" value="protein"/>
</dbReference>
<dbReference type="Bgee" id="ENSMUSG00000039130">
    <property type="expression patterns" value="Expressed in otic placode and 259 other cell types or tissues"/>
</dbReference>
<dbReference type="ExpressionAtlas" id="Q80YV2">
    <property type="expression patterns" value="baseline and differential"/>
</dbReference>
<dbReference type="GO" id="GO:0031965">
    <property type="term" value="C:nuclear membrane"/>
    <property type="evidence" value="ECO:0007669"/>
    <property type="project" value="Ensembl"/>
</dbReference>
<dbReference type="GO" id="GO:0044615">
    <property type="term" value="C:nuclear pore nuclear basket"/>
    <property type="evidence" value="ECO:0007669"/>
    <property type="project" value="Ensembl"/>
</dbReference>
<dbReference type="GO" id="GO:0005654">
    <property type="term" value="C:nucleoplasm"/>
    <property type="evidence" value="ECO:0007669"/>
    <property type="project" value="Ensembl"/>
</dbReference>
<dbReference type="GO" id="GO:0005634">
    <property type="term" value="C:nucleus"/>
    <property type="evidence" value="ECO:0000314"/>
    <property type="project" value="MGI"/>
</dbReference>
<dbReference type="GO" id="GO:0019901">
    <property type="term" value="F:protein kinase binding"/>
    <property type="evidence" value="ECO:0007669"/>
    <property type="project" value="Ensembl"/>
</dbReference>
<dbReference type="GO" id="GO:0008270">
    <property type="term" value="F:zinc ion binding"/>
    <property type="evidence" value="ECO:0007669"/>
    <property type="project" value="UniProtKB-KW"/>
</dbReference>
<dbReference type="GO" id="GO:0051301">
    <property type="term" value="P:cell division"/>
    <property type="evidence" value="ECO:0007669"/>
    <property type="project" value="UniProtKB-KW"/>
</dbReference>
<dbReference type="GO" id="GO:0016567">
    <property type="term" value="P:protein ubiquitination"/>
    <property type="evidence" value="ECO:0007669"/>
    <property type="project" value="UniProtKB-UniPathway"/>
</dbReference>
<dbReference type="InterPro" id="IPR013909">
    <property type="entry name" value="NuBaID_C"/>
</dbReference>
<dbReference type="InterPro" id="IPR012935">
    <property type="entry name" value="NuBaID_N"/>
</dbReference>
<dbReference type="PANTHER" id="PTHR15835">
    <property type="entry name" value="NUCLEAR-INTERACTING PARTNER OF ALK"/>
    <property type="match status" value="1"/>
</dbReference>
<dbReference type="PANTHER" id="PTHR15835:SF6">
    <property type="entry name" value="ZINC FINGER C3HC-TYPE PROTEIN 1"/>
    <property type="match status" value="1"/>
</dbReference>
<dbReference type="Pfam" id="PF08600">
    <property type="entry name" value="NuBaID_C"/>
    <property type="match status" value="1"/>
</dbReference>
<dbReference type="Pfam" id="PF07967">
    <property type="entry name" value="zf-C3HC"/>
    <property type="match status" value="1"/>
</dbReference>